<reference key="1">
    <citation type="journal article" date="2006" name="Gen. Comp. Endocrinol.">
        <title>Cloning and sequence analysis of pituitary prolactin cDNA from the Northern brown bandicoot (Isoodon macrourus).</title>
        <authorList>
            <person name="Veitch C."/>
            <person name="Gemmell R.T."/>
            <person name="Curlewis J.D."/>
        </authorList>
    </citation>
    <scope>NUCLEOTIDE SEQUENCE [MRNA]</scope>
    <source>
        <tissue>Pituitary</tissue>
    </source>
</reference>
<sequence>MCTKRSSLKGSLLLLLLISSLLLSRSVDSLPICPSGSVNCQVSLSDLFDRAVMLSHYIHSLSSEMFNEFDERYAQGRGFITKAINSCHTSSLSTPEDKGQAQQIHHEALLNLVLRVLRSWNEPLYHLVTEVRSMQEAPHTILLKAMEIEEQNKKLLEGMEKIVGQVHPGDRENEVYSVWSGLPSLQMADEDTRLFAFYNLLHCLRRDSHKIDNYLKLLKCRLIHDSNC</sequence>
<organism>
    <name type="scientific">Isoodon macrourus</name>
    <name type="common">Short-nosed bandicoot</name>
    <name type="synonym">Northern brown bandicoot</name>
    <dbReference type="NCBI Taxonomy" id="37698"/>
    <lineage>
        <taxon>Eukaryota</taxon>
        <taxon>Metazoa</taxon>
        <taxon>Chordata</taxon>
        <taxon>Craniata</taxon>
        <taxon>Vertebrata</taxon>
        <taxon>Euteleostomi</taxon>
        <taxon>Mammalia</taxon>
        <taxon>Metatheria</taxon>
        <taxon>Peramelemorphia</taxon>
        <taxon>Peramelidae</taxon>
        <taxon>Isoodon</taxon>
    </lineage>
</organism>
<protein>
    <recommendedName>
        <fullName>Prolactin</fullName>
        <shortName>PRL</shortName>
    </recommendedName>
</protein>
<dbReference type="EMBL" id="DQ159942">
    <property type="protein sequence ID" value="AAZ85065.1"/>
    <property type="molecule type" value="mRNA"/>
</dbReference>
<dbReference type="SMR" id="Q3Y4G6"/>
<dbReference type="GO" id="GO:0005615">
    <property type="term" value="C:extracellular space"/>
    <property type="evidence" value="ECO:0007669"/>
    <property type="project" value="TreeGrafter"/>
</dbReference>
<dbReference type="GO" id="GO:0005179">
    <property type="term" value="F:hormone activity"/>
    <property type="evidence" value="ECO:0007669"/>
    <property type="project" value="UniProtKB-KW"/>
</dbReference>
<dbReference type="GO" id="GO:0005148">
    <property type="term" value="F:prolactin receptor binding"/>
    <property type="evidence" value="ECO:0007669"/>
    <property type="project" value="TreeGrafter"/>
</dbReference>
<dbReference type="GO" id="GO:0007565">
    <property type="term" value="P:female pregnancy"/>
    <property type="evidence" value="ECO:0007669"/>
    <property type="project" value="TreeGrafter"/>
</dbReference>
<dbReference type="GO" id="GO:0007595">
    <property type="term" value="P:lactation"/>
    <property type="evidence" value="ECO:0007669"/>
    <property type="project" value="UniProtKB-KW"/>
</dbReference>
<dbReference type="GO" id="GO:0008284">
    <property type="term" value="P:positive regulation of cell population proliferation"/>
    <property type="evidence" value="ECO:0007669"/>
    <property type="project" value="TreeGrafter"/>
</dbReference>
<dbReference type="GO" id="GO:1903489">
    <property type="term" value="P:positive regulation of lactation"/>
    <property type="evidence" value="ECO:0007669"/>
    <property type="project" value="TreeGrafter"/>
</dbReference>
<dbReference type="GO" id="GO:0046427">
    <property type="term" value="P:positive regulation of receptor signaling pathway via JAK-STAT"/>
    <property type="evidence" value="ECO:0007669"/>
    <property type="project" value="TreeGrafter"/>
</dbReference>
<dbReference type="GO" id="GO:0031667">
    <property type="term" value="P:response to nutrient levels"/>
    <property type="evidence" value="ECO:0007669"/>
    <property type="project" value="TreeGrafter"/>
</dbReference>
<dbReference type="CDD" id="cd10288">
    <property type="entry name" value="prolactin_like"/>
    <property type="match status" value="1"/>
</dbReference>
<dbReference type="FunFam" id="1.20.1250.10:FF:000003">
    <property type="entry name" value="Prolactin"/>
    <property type="match status" value="1"/>
</dbReference>
<dbReference type="Gene3D" id="1.20.1250.10">
    <property type="match status" value="1"/>
</dbReference>
<dbReference type="InterPro" id="IPR009079">
    <property type="entry name" value="4_helix_cytokine-like_core"/>
</dbReference>
<dbReference type="InterPro" id="IPR001400">
    <property type="entry name" value="Somatotropin/Prolactin"/>
</dbReference>
<dbReference type="InterPro" id="IPR018116">
    <property type="entry name" value="Somatotropin_CS"/>
</dbReference>
<dbReference type="PANTHER" id="PTHR11417:SF5">
    <property type="entry name" value="PROLACTIN"/>
    <property type="match status" value="1"/>
</dbReference>
<dbReference type="PANTHER" id="PTHR11417">
    <property type="entry name" value="SOMATOTROPIN,PROLACTIN"/>
    <property type="match status" value="1"/>
</dbReference>
<dbReference type="Pfam" id="PF00103">
    <property type="entry name" value="Hormone_1"/>
    <property type="match status" value="1"/>
</dbReference>
<dbReference type="PRINTS" id="PR00836">
    <property type="entry name" value="SOMATOTROPIN"/>
</dbReference>
<dbReference type="SUPFAM" id="SSF47266">
    <property type="entry name" value="4-helical cytokines"/>
    <property type="match status" value="1"/>
</dbReference>
<dbReference type="PROSITE" id="PS00266">
    <property type="entry name" value="SOMATOTROPIN_1"/>
    <property type="match status" value="1"/>
</dbReference>
<dbReference type="PROSITE" id="PS00338">
    <property type="entry name" value="SOMATOTROPIN_2"/>
    <property type="match status" value="1"/>
</dbReference>
<gene>
    <name type="primary">PRL</name>
</gene>
<proteinExistence type="evidence at transcript level"/>
<feature type="signal peptide" evidence="1">
    <location>
        <begin position="1"/>
        <end position="29"/>
    </location>
</feature>
<feature type="chain" id="PRO_0000043395" description="Prolactin">
    <location>
        <begin position="30"/>
        <end position="228"/>
    </location>
</feature>
<feature type="modified residue" description="Phosphoserine" evidence="3">
    <location>
        <position position="55"/>
    </location>
</feature>
<feature type="modified residue" description="Phosphoserine" evidence="3">
    <location>
        <position position="63"/>
    </location>
</feature>
<feature type="modified residue" description="Phosphoserine" evidence="3">
    <location>
        <position position="119"/>
    </location>
</feature>
<feature type="disulfide bond" evidence="1">
    <location>
        <begin position="33"/>
        <end position="40"/>
    </location>
</feature>
<feature type="disulfide bond" evidence="1">
    <location>
        <begin position="87"/>
        <end position="203"/>
    </location>
</feature>
<feature type="disulfide bond" evidence="1">
    <location>
        <begin position="220"/>
        <end position="228"/>
    </location>
</feature>
<name>PRL_ISOMA</name>
<accession>Q3Y4G6</accession>
<evidence type="ECO:0000250" key="1"/>
<evidence type="ECO:0000250" key="2">
    <source>
        <dbReference type="UniProtKB" id="P01236"/>
    </source>
</evidence>
<evidence type="ECO:0000250" key="3">
    <source>
        <dbReference type="UniProtKB" id="P01239"/>
    </source>
</evidence>
<evidence type="ECO:0000305" key="4"/>
<comment type="function">
    <text>Prolactin acts primarily on the mammary gland by promoting lactation.</text>
</comment>
<comment type="subunit">
    <text evidence="2">Interacts with PRLR.</text>
</comment>
<comment type="subcellular location">
    <subcellularLocation>
        <location>Secreted</location>
    </subcellularLocation>
</comment>
<comment type="similarity">
    <text evidence="4">Belongs to the somatotropin/prolactin family.</text>
</comment>
<keyword id="KW-1015">Disulfide bond</keyword>
<keyword id="KW-0372">Hormone</keyword>
<keyword id="KW-0421">Lactation</keyword>
<keyword id="KW-0597">Phosphoprotein</keyword>
<keyword id="KW-0964">Secreted</keyword>
<keyword id="KW-0732">Signal</keyword>